<keyword id="KW-0025">Alternative splicing</keyword>
<keyword id="KW-0238">DNA-binding</keyword>
<keyword id="KW-0479">Metal-binding</keyword>
<keyword id="KW-0539">Nucleus</keyword>
<keyword id="KW-1267">Proteomics identification</keyword>
<keyword id="KW-1185">Reference proteome</keyword>
<keyword id="KW-0677">Repeat</keyword>
<keyword id="KW-0804">Transcription</keyword>
<keyword id="KW-0805">Transcription regulation</keyword>
<keyword id="KW-0862">Zinc</keyword>
<keyword id="KW-0863">Zinc-finger</keyword>
<evidence type="ECO:0000255" key="1">
    <source>
        <dbReference type="PROSITE-ProRule" id="PRU00042"/>
    </source>
</evidence>
<evidence type="ECO:0000255" key="2">
    <source>
        <dbReference type="PROSITE-ProRule" id="PRU00119"/>
    </source>
</evidence>
<evidence type="ECO:0000303" key="3">
    <source>
    </source>
</evidence>
<evidence type="ECO:0000303" key="4">
    <source>
    </source>
</evidence>
<evidence type="ECO:0000305" key="5"/>
<dbReference type="EMBL" id="AK055483">
    <property type="protein sequence ID" value="BAB70929.1"/>
    <property type="molecule type" value="mRNA"/>
</dbReference>
<dbReference type="EMBL" id="AK074539">
    <property type="protein sequence ID" value="BAC11047.1"/>
    <property type="molecule type" value="mRNA"/>
</dbReference>
<dbReference type="EMBL" id="AC093227">
    <property type="status" value="NOT_ANNOTATED_CDS"/>
    <property type="molecule type" value="Genomic_DNA"/>
</dbReference>
<dbReference type="EMBL" id="AC016582">
    <property type="status" value="NOT_ANNOTATED_CDS"/>
    <property type="molecule type" value="Genomic_DNA"/>
</dbReference>
<dbReference type="EMBL" id="BC015418">
    <property type="protein sequence ID" value="AAH15418.1"/>
    <property type="molecule type" value="mRNA"/>
</dbReference>
<dbReference type="EMBL" id="BC042170">
    <property type="protein sequence ID" value="AAH42170.2"/>
    <property type="status" value="ALT_INIT"/>
    <property type="molecule type" value="mRNA"/>
</dbReference>
<dbReference type="EMBL" id="BC051263">
    <property type="protein sequence ID" value="AAH51263.1"/>
    <property type="molecule type" value="mRNA"/>
</dbReference>
<dbReference type="EMBL" id="BC064962">
    <property type="protein sequence ID" value="AAH64962.1"/>
    <property type="molecule type" value="mRNA"/>
</dbReference>
<dbReference type="CCDS" id="CCDS12508.1">
    <molecule id="Q86YE8-3"/>
</dbReference>
<dbReference type="CCDS" id="CCDS59381.1">
    <molecule id="Q86YE8-1"/>
</dbReference>
<dbReference type="RefSeq" id="NP_001166160.1">
    <molecule id="Q86YE8-2"/>
    <property type="nucleotide sequence ID" value="NM_001172689.2"/>
</dbReference>
<dbReference type="RefSeq" id="NP_001166161.1">
    <molecule id="Q86YE8-1"/>
    <property type="nucleotide sequence ID" value="NM_001172690.2"/>
</dbReference>
<dbReference type="RefSeq" id="NP_001166162.1">
    <property type="nucleotide sequence ID" value="NM_001172691.1"/>
</dbReference>
<dbReference type="RefSeq" id="NP_001166163.1">
    <molecule id="Q86YE8-2"/>
    <property type="nucleotide sequence ID" value="NM_001172692.2"/>
</dbReference>
<dbReference type="RefSeq" id="NP_689573.3">
    <molecule id="Q86YE8-3"/>
    <property type="nucleotide sequence ID" value="NM_152360.3"/>
</dbReference>
<dbReference type="RefSeq" id="XP_016881769.1">
    <property type="nucleotide sequence ID" value="XM_017026280.1"/>
</dbReference>
<dbReference type="RefSeq" id="XP_016881770.1">
    <property type="nucleotide sequence ID" value="XM_017026281.1"/>
</dbReference>
<dbReference type="SMR" id="Q86YE8"/>
<dbReference type="BioGRID" id="125967">
    <property type="interactions" value="7"/>
</dbReference>
<dbReference type="FunCoup" id="Q86YE8">
    <property type="interactions" value="37"/>
</dbReference>
<dbReference type="IntAct" id="Q86YE8">
    <property type="interactions" value="1"/>
</dbReference>
<dbReference type="STRING" id="9606.ENSP00000440464"/>
<dbReference type="GlyGen" id="Q86YE8">
    <property type="glycosylation" value="1 site, 1 O-linked glycan (1 site)"/>
</dbReference>
<dbReference type="iPTMnet" id="Q86YE8"/>
<dbReference type="PhosphoSitePlus" id="Q86YE8"/>
<dbReference type="BioMuta" id="ZNF573"/>
<dbReference type="DMDM" id="143811478"/>
<dbReference type="jPOST" id="Q86YE8"/>
<dbReference type="MassIVE" id="Q86YE8"/>
<dbReference type="PaxDb" id="9606-ENSP00000440464"/>
<dbReference type="PeptideAtlas" id="Q86YE8"/>
<dbReference type="ProteomicsDB" id="70406">
    <molecule id="Q86YE8-1"/>
</dbReference>
<dbReference type="ProteomicsDB" id="70407">
    <molecule id="Q86YE8-2"/>
</dbReference>
<dbReference type="ProteomicsDB" id="70408">
    <molecule id="Q86YE8-3"/>
</dbReference>
<dbReference type="ProteomicsDB" id="70409">
    <molecule id="Q86YE8-4"/>
</dbReference>
<dbReference type="Antibodypedia" id="29955">
    <property type="antibodies" value="21 antibodies from 8 providers"/>
</dbReference>
<dbReference type="DNASU" id="126231"/>
<dbReference type="Ensembl" id="ENST00000339503.7">
    <molecule id="Q86YE8-3"/>
    <property type="protein sequence ID" value="ENSP00000340171.4"/>
    <property type="gene ID" value="ENSG00000189144.15"/>
</dbReference>
<dbReference type="Ensembl" id="ENST00000392138.5">
    <molecule id="Q86YE8-4"/>
    <property type="protein sequence ID" value="ENSP00000375983.1"/>
    <property type="gene ID" value="ENSG00000189144.15"/>
</dbReference>
<dbReference type="Ensembl" id="ENST00000536220.7">
    <molecule id="Q86YE8-1"/>
    <property type="protein sequence ID" value="ENSP00000440464.2"/>
    <property type="gene ID" value="ENSG00000189144.15"/>
</dbReference>
<dbReference type="GeneID" id="126231"/>
<dbReference type="KEGG" id="hsa:126231"/>
<dbReference type="MANE-Select" id="ENST00000536220.7">
    <property type="protein sequence ID" value="ENSP00000440464.2"/>
    <property type="RefSeq nucleotide sequence ID" value="NM_001172690.2"/>
    <property type="RefSeq protein sequence ID" value="NP_001166161.1"/>
</dbReference>
<dbReference type="UCSC" id="uc002ohe.3">
    <molecule id="Q86YE8-1"/>
    <property type="organism name" value="human"/>
</dbReference>
<dbReference type="AGR" id="HGNC:26420"/>
<dbReference type="CTD" id="126231"/>
<dbReference type="DisGeNET" id="126231"/>
<dbReference type="GeneCards" id="ZNF573"/>
<dbReference type="HGNC" id="HGNC:26420">
    <property type="gene designation" value="ZNF573"/>
</dbReference>
<dbReference type="HPA" id="ENSG00000189144">
    <property type="expression patterns" value="Low tissue specificity"/>
</dbReference>
<dbReference type="neXtProt" id="NX_Q86YE8"/>
<dbReference type="OpenTargets" id="ENSG00000189144"/>
<dbReference type="PharmGKB" id="PA134883623"/>
<dbReference type="VEuPathDB" id="HostDB:ENSG00000189144"/>
<dbReference type="eggNOG" id="KOG1721">
    <property type="taxonomic scope" value="Eukaryota"/>
</dbReference>
<dbReference type="GeneTree" id="ENSGT00940000163768"/>
<dbReference type="HOGENOM" id="CLU_002678_44_5_1"/>
<dbReference type="InParanoid" id="Q86YE8"/>
<dbReference type="OMA" id="HIERPYE"/>
<dbReference type="OrthoDB" id="9411774at2759"/>
<dbReference type="PAN-GO" id="Q86YE8">
    <property type="GO annotations" value="4 GO annotations based on evolutionary models"/>
</dbReference>
<dbReference type="PhylomeDB" id="Q86YE8"/>
<dbReference type="TreeFam" id="TF341817"/>
<dbReference type="PathwayCommons" id="Q86YE8"/>
<dbReference type="Reactome" id="R-HSA-212436">
    <property type="pathway name" value="Generic Transcription Pathway"/>
</dbReference>
<dbReference type="SignaLink" id="Q86YE8"/>
<dbReference type="BioGRID-ORCS" id="126231">
    <property type="hits" value="11 hits in 1168 CRISPR screens"/>
</dbReference>
<dbReference type="ChiTaRS" id="ZNF573">
    <property type="organism name" value="human"/>
</dbReference>
<dbReference type="GenomeRNAi" id="126231"/>
<dbReference type="Pharos" id="Q86YE8">
    <property type="development level" value="Tdark"/>
</dbReference>
<dbReference type="PRO" id="PR:Q86YE8"/>
<dbReference type="Proteomes" id="UP000005640">
    <property type="component" value="Chromosome 19"/>
</dbReference>
<dbReference type="RNAct" id="Q86YE8">
    <property type="molecule type" value="protein"/>
</dbReference>
<dbReference type="Bgee" id="ENSG00000189144">
    <property type="expression patterns" value="Expressed in nipple and 200 other cell types or tissues"/>
</dbReference>
<dbReference type="ExpressionAtlas" id="Q86YE8">
    <property type="expression patterns" value="baseline and differential"/>
</dbReference>
<dbReference type="GO" id="GO:0005634">
    <property type="term" value="C:nucleus"/>
    <property type="evidence" value="ECO:0000318"/>
    <property type="project" value="GO_Central"/>
</dbReference>
<dbReference type="GO" id="GO:0000981">
    <property type="term" value="F:DNA-binding transcription factor activity, RNA polymerase II-specific"/>
    <property type="evidence" value="ECO:0000318"/>
    <property type="project" value="GO_Central"/>
</dbReference>
<dbReference type="GO" id="GO:0000978">
    <property type="term" value="F:RNA polymerase II cis-regulatory region sequence-specific DNA binding"/>
    <property type="evidence" value="ECO:0000318"/>
    <property type="project" value="GO_Central"/>
</dbReference>
<dbReference type="GO" id="GO:0008270">
    <property type="term" value="F:zinc ion binding"/>
    <property type="evidence" value="ECO:0007669"/>
    <property type="project" value="UniProtKB-KW"/>
</dbReference>
<dbReference type="GO" id="GO:0006357">
    <property type="term" value="P:regulation of transcription by RNA polymerase II"/>
    <property type="evidence" value="ECO:0000318"/>
    <property type="project" value="GO_Central"/>
</dbReference>
<dbReference type="CDD" id="cd07765">
    <property type="entry name" value="KRAB_A-box"/>
    <property type="match status" value="1"/>
</dbReference>
<dbReference type="FunFam" id="3.30.160.60:FF:000020">
    <property type="entry name" value="Zinc finger protein 14 homolog"/>
    <property type="match status" value="2"/>
</dbReference>
<dbReference type="FunFam" id="3.30.160.60:FF:000053">
    <property type="entry name" value="zinc finger protein 182 isoform X1"/>
    <property type="match status" value="1"/>
</dbReference>
<dbReference type="FunFam" id="3.30.160.60:FF:000295">
    <property type="entry name" value="zinc finger protein 19"/>
    <property type="match status" value="1"/>
</dbReference>
<dbReference type="FunFam" id="3.30.160.60:FF:000551">
    <property type="entry name" value="zinc finger protein 197 isoform X1"/>
    <property type="match status" value="1"/>
</dbReference>
<dbReference type="FunFam" id="3.30.160.60:FF:002343">
    <property type="entry name" value="Zinc finger protein 33A"/>
    <property type="match status" value="1"/>
</dbReference>
<dbReference type="FunFam" id="3.30.160.60:FF:001498">
    <property type="entry name" value="Zinc finger protein 404"/>
    <property type="match status" value="3"/>
</dbReference>
<dbReference type="FunFam" id="3.30.160.60:FF:002254">
    <property type="entry name" value="Zinc finger protein 540"/>
    <property type="match status" value="3"/>
</dbReference>
<dbReference type="FunFam" id="3.30.160.60:FF:000052">
    <property type="entry name" value="zinc finger protein 546 isoform X1"/>
    <property type="match status" value="1"/>
</dbReference>
<dbReference type="FunFam" id="3.30.160.60:FF:000384">
    <property type="entry name" value="Zinc finger protein 550"/>
    <property type="match status" value="1"/>
</dbReference>
<dbReference type="FunFam" id="3.30.160.60:FF:000281">
    <property type="entry name" value="Zinc finger protein 558 isoform X1"/>
    <property type="match status" value="1"/>
</dbReference>
<dbReference type="FunFam" id="3.30.160.60:FF:000051">
    <property type="entry name" value="zinc finger protein 585A"/>
    <property type="match status" value="1"/>
</dbReference>
<dbReference type="FunFam" id="3.30.160.60:FF:000361">
    <property type="entry name" value="Zinc finger protein 658"/>
    <property type="match status" value="1"/>
</dbReference>
<dbReference type="FunFam" id="3.30.160.60:FF:001933">
    <property type="entry name" value="Zinc finger protein 870"/>
    <property type="match status" value="1"/>
</dbReference>
<dbReference type="Gene3D" id="6.10.140.140">
    <property type="match status" value="1"/>
</dbReference>
<dbReference type="Gene3D" id="3.30.160.60">
    <property type="entry name" value="Classic Zinc Finger"/>
    <property type="match status" value="19"/>
</dbReference>
<dbReference type="InterPro" id="IPR001909">
    <property type="entry name" value="KRAB"/>
</dbReference>
<dbReference type="InterPro" id="IPR036051">
    <property type="entry name" value="KRAB_dom_sf"/>
</dbReference>
<dbReference type="InterPro" id="IPR036236">
    <property type="entry name" value="Znf_C2H2_sf"/>
</dbReference>
<dbReference type="InterPro" id="IPR013087">
    <property type="entry name" value="Znf_C2H2_type"/>
</dbReference>
<dbReference type="PANTHER" id="PTHR24379">
    <property type="entry name" value="KRAB AND ZINC FINGER DOMAIN-CONTAINING"/>
    <property type="match status" value="1"/>
</dbReference>
<dbReference type="PANTHER" id="PTHR24379:SF131">
    <property type="entry name" value="ZINC FINGER PROTEIN 737-LIKE-RELATED"/>
    <property type="match status" value="1"/>
</dbReference>
<dbReference type="Pfam" id="PF01352">
    <property type="entry name" value="KRAB"/>
    <property type="match status" value="1"/>
</dbReference>
<dbReference type="Pfam" id="PF00096">
    <property type="entry name" value="zf-C2H2"/>
    <property type="match status" value="17"/>
</dbReference>
<dbReference type="Pfam" id="PF13912">
    <property type="entry name" value="zf-C2H2_6"/>
    <property type="match status" value="1"/>
</dbReference>
<dbReference type="SMART" id="SM00349">
    <property type="entry name" value="KRAB"/>
    <property type="match status" value="1"/>
</dbReference>
<dbReference type="SMART" id="SM00355">
    <property type="entry name" value="ZnF_C2H2"/>
    <property type="match status" value="19"/>
</dbReference>
<dbReference type="SUPFAM" id="SSF57667">
    <property type="entry name" value="beta-beta-alpha zinc fingers"/>
    <property type="match status" value="10"/>
</dbReference>
<dbReference type="SUPFAM" id="SSF109640">
    <property type="entry name" value="KRAB domain (Kruppel-associated box)"/>
    <property type="match status" value="1"/>
</dbReference>
<dbReference type="PROSITE" id="PS50805">
    <property type="entry name" value="KRAB"/>
    <property type="match status" value="1"/>
</dbReference>
<dbReference type="PROSITE" id="PS00028">
    <property type="entry name" value="ZINC_FINGER_C2H2_1"/>
    <property type="match status" value="19"/>
</dbReference>
<dbReference type="PROSITE" id="PS50157">
    <property type="entry name" value="ZINC_FINGER_C2H2_2"/>
    <property type="match status" value="19"/>
</dbReference>
<reference key="1">
    <citation type="journal article" date="2004" name="Nat. Genet.">
        <title>Complete sequencing and characterization of 21,243 full-length human cDNAs.</title>
        <authorList>
            <person name="Ota T."/>
            <person name="Suzuki Y."/>
            <person name="Nishikawa T."/>
            <person name="Otsuki T."/>
            <person name="Sugiyama T."/>
            <person name="Irie R."/>
            <person name="Wakamatsu A."/>
            <person name="Hayashi K."/>
            <person name="Sato H."/>
            <person name="Nagai K."/>
            <person name="Kimura K."/>
            <person name="Makita H."/>
            <person name="Sekine M."/>
            <person name="Obayashi M."/>
            <person name="Nishi T."/>
            <person name="Shibahara T."/>
            <person name="Tanaka T."/>
            <person name="Ishii S."/>
            <person name="Yamamoto J."/>
            <person name="Saito K."/>
            <person name="Kawai Y."/>
            <person name="Isono Y."/>
            <person name="Nakamura Y."/>
            <person name="Nagahari K."/>
            <person name="Murakami K."/>
            <person name="Yasuda T."/>
            <person name="Iwayanagi T."/>
            <person name="Wagatsuma M."/>
            <person name="Shiratori A."/>
            <person name="Sudo H."/>
            <person name="Hosoiri T."/>
            <person name="Kaku Y."/>
            <person name="Kodaira H."/>
            <person name="Kondo H."/>
            <person name="Sugawara M."/>
            <person name="Takahashi M."/>
            <person name="Kanda K."/>
            <person name="Yokoi T."/>
            <person name="Furuya T."/>
            <person name="Kikkawa E."/>
            <person name="Omura Y."/>
            <person name="Abe K."/>
            <person name="Kamihara K."/>
            <person name="Katsuta N."/>
            <person name="Sato K."/>
            <person name="Tanikawa M."/>
            <person name="Yamazaki M."/>
            <person name="Ninomiya K."/>
            <person name="Ishibashi T."/>
            <person name="Yamashita H."/>
            <person name="Murakawa K."/>
            <person name="Fujimori K."/>
            <person name="Tanai H."/>
            <person name="Kimata M."/>
            <person name="Watanabe M."/>
            <person name="Hiraoka S."/>
            <person name="Chiba Y."/>
            <person name="Ishida S."/>
            <person name="Ono Y."/>
            <person name="Takiguchi S."/>
            <person name="Watanabe S."/>
            <person name="Yosida M."/>
            <person name="Hotuta T."/>
            <person name="Kusano J."/>
            <person name="Kanehori K."/>
            <person name="Takahashi-Fujii A."/>
            <person name="Hara H."/>
            <person name="Tanase T.-O."/>
            <person name="Nomura Y."/>
            <person name="Togiya S."/>
            <person name="Komai F."/>
            <person name="Hara R."/>
            <person name="Takeuchi K."/>
            <person name="Arita M."/>
            <person name="Imose N."/>
            <person name="Musashino K."/>
            <person name="Yuuki H."/>
            <person name="Oshima A."/>
            <person name="Sasaki N."/>
            <person name="Aotsuka S."/>
            <person name="Yoshikawa Y."/>
            <person name="Matsunawa H."/>
            <person name="Ichihara T."/>
            <person name="Shiohata N."/>
            <person name="Sano S."/>
            <person name="Moriya S."/>
            <person name="Momiyama H."/>
            <person name="Satoh N."/>
            <person name="Takami S."/>
            <person name="Terashima Y."/>
            <person name="Suzuki O."/>
            <person name="Nakagawa S."/>
            <person name="Senoh A."/>
            <person name="Mizoguchi H."/>
            <person name="Goto Y."/>
            <person name="Shimizu F."/>
            <person name="Wakebe H."/>
            <person name="Hishigaki H."/>
            <person name="Watanabe T."/>
            <person name="Sugiyama A."/>
            <person name="Takemoto M."/>
            <person name="Kawakami B."/>
            <person name="Yamazaki M."/>
            <person name="Watanabe K."/>
            <person name="Kumagai A."/>
            <person name="Itakura S."/>
            <person name="Fukuzumi Y."/>
            <person name="Fujimori Y."/>
            <person name="Komiyama M."/>
            <person name="Tashiro H."/>
            <person name="Tanigami A."/>
            <person name="Fujiwara T."/>
            <person name="Ono T."/>
            <person name="Yamada K."/>
            <person name="Fujii Y."/>
            <person name="Ozaki K."/>
            <person name="Hirao M."/>
            <person name="Ohmori Y."/>
            <person name="Kawabata A."/>
            <person name="Hikiji T."/>
            <person name="Kobatake N."/>
            <person name="Inagaki H."/>
            <person name="Ikema Y."/>
            <person name="Okamoto S."/>
            <person name="Okitani R."/>
            <person name="Kawakami T."/>
            <person name="Noguchi S."/>
            <person name="Itoh T."/>
            <person name="Shigeta K."/>
            <person name="Senba T."/>
            <person name="Matsumura K."/>
            <person name="Nakajima Y."/>
            <person name="Mizuno T."/>
            <person name="Morinaga M."/>
            <person name="Sasaki M."/>
            <person name="Togashi T."/>
            <person name="Oyama M."/>
            <person name="Hata H."/>
            <person name="Watanabe M."/>
            <person name="Komatsu T."/>
            <person name="Mizushima-Sugano J."/>
            <person name="Satoh T."/>
            <person name="Shirai Y."/>
            <person name="Takahashi Y."/>
            <person name="Nakagawa K."/>
            <person name="Okumura K."/>
            <person name="Nagase T."/>
            <person name="Nomura N."/>
            <person name="Kikuchi H."/>
            <person name="Masuho Y."/>
            <person name="Yamashita R."/>
            <person name="Nakai K."/>
            <person name="Yada T."/>
            <person name="Nakamura Y."/>
            <person name="Ohara O."/>
            <person name="Isogai T."/>
            <person name="Sugano S."/>
        </authorList>
    </citation>
    <scope>NUCLEOTIDE SEQUENCE [LARGE SCALE MRNA] (ISOFORMS 2 AND 4)</scope>
    <source>
        <tissue>Brain</tissue>
        <tissue>Embryo</tissue>
    </source>
</reference>
<reference key="2">
    <citation type="journal article" date="2004" name="Nature">
        <title>The DNA sequence and biology of human chromosome 19.</title>
        <authorList>
            <person name="Grimwood J."/>
            <person name="Gordon L.A."/>
            <person name="Olsen A.S."/>
            <person name="Terry A."/>
            <person name="Schmutz J."/>
            <person name="Lamerdin J.E."/>
            <person name="Hellsten U."/>
            <person name="Goodstein D."/>
            <person name="Couronne O."/>
            <person name="Tran-Gyamfi M."/>
            <person name="Aerts A."/>
            <person name="Altherr M."/>
            <person name="Ashworth L."/>
            <person name="Bajorek E."/>
            <person name="Black S."/>
            <person name="Branscomb E."/>
            <person name="Caenepeel S."/>
            <person name="Carrano A.V."/>
            <person name="Caoile C."/>
            <person name="Chan Y.M."/>
            <person name="Christensen M."/>
            <person name="Cleland C.A."/>
            <person name="Copeland A."/>
            <person name="Dalin E."/>
            <person name="Dehal P."/>
            <person name="Denys M."/>
            <person name="Detter J.C."/>
            <person name="Escobar J."/>
            <person name="Flowers D."/>
            <person name="Fotopulos D."/>
            <person name="Garcia C."/>
            <person name="Georgescu A.M."/>
            <person name="Glavina T."/>
            <person name="Gomez M."/>
            <person name="Gonzales E."/>
            <person name="Groza M."/>
            <person name="Hammon N."/>
            <person name="Hawkins T."/>
            <person name="Haydu L."/>
            <person name="Ho I."/>
            <person name="Huang W."/>
            <person name="Israni S."/>
            <person name="Jett J."/>
            <person name="Kadner K."/>
            <person name="Kimball H."/>
            <person name="Kobayashi A."/>
            <person name="Larionov V."/>
            <person name="Leem S.-H."/>
            <person name="Lopez F."/>
            <person name="Lou Y."/>
            <person name="Lowry S."/>
            <person name="Malfatti S."/>
            <person name="Martinez D."/>
            <person name="McCready P.M."/>
            <person name="Medina C."/>
            <person name="Morgan J."/>
            <person name="Nelson K."/>
            <person name="Nolan M."/>
            <person name="Ovcharenko I."/>
            <person name="Pitluck S."/>
            <person name="Pollard M."/>
            <person name="Popkie A.P."/>
            <person name="Predki P."/>
            <person name="Quan G."/>
            <person name="Ramirez L."/>
            <person name="Rash S."/>
            <person name="Retterer J."/>
            <person name="Rodriguez A."/>
            <person name="Rogers S."/>
            <person name="Salamov A."/>
            <person name="Salazar A."/>
            <person name="She X."/>
            <person name="Smith D."/>
            <person name="Slezak T."/>
            <person name="Solovyev V."/>
            <person name="Thayer N."/>
            <person name="Tice H."/>
            <person name="Tsai M."/>
            <person name="Ustaszewska A."/>
            <person name="Vo N."/>
            <person name="Wagner M."/>
            <person name="Wheeler J."/>
            <person name="Wu K."/>
            <person name="Xie G."/>
            <person name="Yang J."/>
            <person name="Dubchak I."/>
            <person name="Furey T.S."/>
            <person name="DeJong P."/>
            <person name="Dickson M."/>
            <person name="Gordon D."/>
            <person name="Eichler E.E."/>
            <person name="Pennacchio L.A."/>
            <person name="Richardson P."/>
            <person name="Stubbs L."/>
            <person name="Rokhsar D.S."/>
            <person name="Myers R.M."/>
            <person name="Rubin E.M."/>
            <person name="Lucas S.M."/>
        </authorList>
    </citation>
    <scope>NUCLEOTIDE SEQUENCE [LARGE SCALE GENOMIC DNA]</scope>
</reference>
<reference key="3">
    <citation type="journal article" date="2004" name="Genome Res.">
        <title>The status, quality, and expansion of the NIH full-length cDNA project: the Mammalian Gene Collection (MGC).</title>
        <authorList>
            <consortium name="The MGC Project Team"/>
        </authorList>
    </citation>
    <scope>NUCLEOTIDE SEQUENCE [LARGE SCALE MRNA] (ISOFORMS 1 AND 3)</scope>
    <source>
        <tissue>Duodenum</tissue>
        <tissue>Eye</tissue>
        <tissue>Lung</tissue>
        <tissue>Uterus</tissue>
    </source>
</reference>
<name>ZN573_HUMAN</name>
<accession>Q86YE8</accession>
<accession>B7WPE1</accession>
<accession>K7EJ45</accession>
<accession>Q6P1P1</accession>
<accession>Q7Z7Q3</accession>
<accession>Q8N2Q1</accession>
<accession>Q96BM3</accession>
<accession>Q96NH0</accession>
<proteinExistence type="evidence at protein level"/>
<comment type="function">
    <text>May be involved in transcriptional regulation.</text>
</comment>
<comment type="subcellular location">
    <subcellularLocation>
        <location evidence="5">Nucleus</location>
    </subcellularLocation>
</comment>
<comment type="alternative products">
    <event type="alternative splicing"/>
    <isoform>
        <id>Q86YE8-1</id>
        <name>1</name>
        <sequence type="displayed"/>
    </isoform>
    <isoform>
        <id>Q86YE8-2</id>
        <name>2</name>
        <sequence type="described" ref="VSP_022895"/>
    </isoform>
    <isoform>
        <id>Q86YE8-3</id>
        <name>3</name>
        <sequence type="described" ref="VSP_022894"/>
    </isoform>
    <isoform>
        <id>Q86YE8-4</id>
        <name>4</name>
        <sequence type="described" ref="VSP_022896 VSP_022897"/>
    </isoform>
</comment>
<comment type="similarity">
    <text evidence="5">Belongs to the krueppel C2H2-type zinc-finger protein family.</text>
</comment>
<comment type="sequence caution" evidence="5">
    <conflict type="erroneous initiation">
        <sequence resource="EMBL-CDS" id="AAH42170"/>
    </conflict>
    <text>Truncated N-terminus.</text>
</comment>
<sequence length="665" mass="78181">MFPVLEPHQVGLIRSYNSKTMTCFQELVTFRDVAIDFSRQEWEYLDPNQRDLYRDVMLENYRNLVSLGGHSISKPVVVDLLERGKEPWMILREETQFTDLDLQCEIISYIEVPTYETDISSTQLQSIYKREKLYECKKCQKKFSSGYQLILHHRFHVIERPYECKECGKNFRSGYQLTLHQRFHTGEKPYECTECGKNFRSGYQLTVHQRFHTGEKTYECRQCGKAFIYASHIVQHERIHTGGKPYECQECGRAFSQGGHLRIHQRVHTGEKPYKCKECGKTFSRRSNLVEHGQFHTDEKPYICEKCGKAFRRGHQLTVHQRVHTGKKPYECKECGKGYTTASYFLLHQRIHKGGKPYECKECKKTFTLYRNLTRHQNIHTGEKLFECKQCGKTYTTGSKLFQHQKTHTGEKPYECKECGKAFSLYGYLKQHQKIHTGMKHFECKECKKTFTLYRNLTRHQNIHTGKKLFECQECGKAYSTGSNLIQHRKTHTGEKPYKCKECGKTFSLHGYLNQHQKIHTGMKPYECKVCRKTFTFYRNLTLHQSIHTDEKPFECKECGKTFRRSSHLTAHQSIHADKKPYECKECGKAFKMYGYLTQHQKIHTGGKPYECKECGKAFSRASNLVQHERIHTGEKPYVCKQCGKTFRYGSALKAHQRIHRSIKV</sequence>
<protein>
    <recommendedName>
        <fullName>Zinc finger protein 573</fullName>
    </recommendedName>
</protein>
<gene>
    <name type="primary">ZNF573</name>
</gene>
<feature type="chain" id="PRO_0000274877" description="Zinc finger protein 573">
    <location>
        <begin position="1"/>
        <end position="665"/>
    </location>
</feature>
<feature type="domain" description="KRAB" evidence="2">
    <location>
        <begin position="28"/>
        <end position="100"/>
    </location>
</feature>
<feature type="zinc finger region" description="C2H2-type 1" evidence="1">
    <location>
        <begin position="134"/>
        <end position="156"/>
    </location>
</feature>
<feature type="zinc finger region" description="C2H2-type 2" evidence="1">
    <location>
        <begin position="162"/>
        <end position="184"/>
    </location>
</feature>
<feature type="zinc finger region" description="C2H2-type 3" evidence="1">
    <location>
        <begin position="190"/>
        <end position="212"/>
    </location>
</feature>
<feature type="zinc finger region" description="C2H2-type 4" evidence="1">
    <location>
        <begin position="218"/>
        <end position="240"/>
    </location>
</feature>
<feature type="zinc finger region" description="C2H2-type 5" evidence="1">
    <location>
        <begin position="246"/>
        <end position="268"/>
    </location>
</feature>
<feature type="zinc finger region" description="C2H2-type 6" evidence="1">
    <location>
        <begin position="274"/>
        <end position="296"/>
    </location>
</feature>
<feature type="zinc finger region" description="C2H2-type 7" evidence="1">
    <location>
        <begin position="302"/>
        <end position="324"/>
    </location>
</feature>
<feature type="zinc finger region" description="C2H2-type 8" evidence="1">
    <location>
        <begin position="330"/>
        <end position="352"/>
    </location>
</feature>
<feature type="zinc finger region" description="C2H2-type 9" evidence="1">
    <location>
        <begin position="358"/>
        <end position="380"/>
    </location>
</feature>
<feature type="zinc finger region" description="C2H2-type 10" evidence="1">
    <location>
        <begin position="386"/>
        <end position="408"/>
    </location>
</feature>
<feature type="zinc finger region" description="C2H2-type 11" evidence="1">
    <location>
        <begin position="414"/>
        <end position="436"/>
    </location>
</feature>
<feature type="zinc finger region" description="C2H2-type 12" evidence="1">
    <location>
        <begin position="442"/>
        <end position="464"/>
    </location>
</feature>
<feature type="zinc finger region" description="C2H2-type 13" evidence="1">
    <location>
        <begin position="470"/>
        <end position="492"/>
    </location>
</feature>
<feature type="zinc finger region" description="C2H2-type 14" evidence="1">
    <location>
        <begin position="498"/>
        <end position="520"/>
    </location>
</feature>
<feature type="zinc finger region" description="C2H2-type 15" evidence="1">
    <location>
        <begin position="526"/>
        <end position="548"/>
    </location>
</feature>
<feature type="zinc finger region" description="C2H2-type 16" evidence="1">
    <location>
        <begin position="554"/>
        <end position="576"/>
    </location>
</feature>
<feature type="zinc finger region" description="C2H2-type 17" evidence="1">
    <location>
        <begin position="582"/>
        <end position="604"/>
    </location>
</feature>
<feature type="zinc finger region" description="C2H2-type 18" evidence="1">
    <location>
        <begin position="610"/>
        <end position="632"/>
    </location>
</feature>
<feature type="zinc finger region" description="C2H2-type 19" evidence="1">
    <location>
        <begin position="638"/>
        <end position="660"/>
    </location>
</feature>
<feature type="splice variant" id="VSP_022894" description="In isoform 3." evidence="4">
    <original>MFPVLEPHQVGLIRSYNSKTMTCFQELVTFRDVAIDFSRQEWEYLDPNQRDLYRDVMLENYRNLVSLGGHSISKPVVVDLLERGKEPWMILREETQF</original>
    <variation>MESCSVAQAGVQWPDLSSLQPPPPRFKQFSCHSLQVAGI</variation>
    <location>
        <begin position="1"/>
        <end position="97"/>
    </location>
</feature>
<feature type="splice variant" id="VSP_022895" description="In isoform 2." evidence="3">
    <location>
        <begin position="1"/>
        <end position="88"/>
    </location>
</feature>
<feature type="splice variant" id="VSP_022896" description="In isoform 4." evidence="3">
    <location>
        <begin position="1"/>
        <end position="56"/>
    </location>
</feature>
<feature type="splice variant" id="VSP_022897" description="In isoform 4." evidence="3">
    <location>
        <begin position="68"/>
        <end position="98"/>
    </location>
</feature>
<feature type="sequence variant" id="VAR_030356" description="In dbSNP:rs3752365.">
    <original>G</original>
    <variation>A</variation>
    <location>
        <position position="186"/>
    </location>
</feature>
<feature type="sequence variant" id="VAR_057426" description="In dbSNP:rs3752365.">
    <original>G</original>
    <variation>A</variation>
    <location>
        <position position="224"/>
    </location>
</feature>
<feature type="sequence conflict" description="In Ref. 1; BAB70929." evidence="5" ref="1">
    <original>K</original>
    <variation>E</variation>
    <location>
        <position position="129"/>
    </location>
</feature>
<feature type="sequence conflict" description="In Ref. 1; BAB70929." evidence="5" ref="1">
    <original>P</original>
    <variation>L</variation>
    <location>
        <position position="329"/>
    </location>
</feature>
<feature type="sequence conflict" description="In Ref. 3; AAH15418/AAH42170/AAH51263/AAH64962." evidence="5" ref="3">
    <original>M</original>
    <variation>V</variation>
    <location>
        <position position="523"/>
    </location>
</feature>
<feature type="sequence conflict" description="In Ref. 1; BAC11047." evidence="5" ref="1">
    <original>F</original>
    <variation>L</variation>
    <location>
        <position position="591"/>
    </location>
</feature>
<organism>
    <name type="scientific">Homo sapiens</name>
    <name type="common">Human</name>
    <dbReference type="NCBI Taxonomy" id="9606"/>
    <lineage>
        <taxon>Eukaryota</taxon>
        <taxon>Metazoa</taxon>
        <taxon>Chordata</taxon>
        <taxon>Craniata</taxon>
        <taxon>Vertebrata</taxon>
        <taxon>Euteleostomi</taxon>
        <taxon>Mammalia</taxon>
        <taxon>Eutheria</taxon>
        <taxon>Euarchontoglires</taxon>
        <taxon>Primates</taxon>
        <taxon>Haplorrhini</taxon>
        <taxon>Catarrhini</taxon>
        <taxon>Hominidae</taxon>
        <taxon>Homo</taxon>
    </lineage>
</organism>